<protein>
    <recommendedName>
        <fullName>Neurofascin</fullName>
    </recommendedName>
</protein>
<name>NFASC_MOUSE</name>
<organism>
    <name type="scientific">Mus musculus</name>
    <name type="common">Mouse</name>
    <dbReference type="NCBI Taxonomy" id="10090"/>
    <lineage>
        <taxon>Eukaryota</taxon>
        <taxon>Metazoa</taxon>
        <taxon>Chordata</taxon>
        <taxon>Craniata</taxon>
        <taxon>Vertebrata</taxon>
        <taxon>Euteleostomi</taxon>
        <taxon>Mammalia</taxon>
        <taxon>Eutheria</taxon>
        <taxon>Euarchontoglires</taxon>
        <taxon>Glires</taxon>
        <taxon>Rodentia</taxon>
        <taxon>Myomorpha</taxon>
        <taxon>Muroidea</taxon>
        <taxon>Muridae</taxon>
        <taxon>Murinae</taxon>
        <taxon>Mus</taxon>
        <taxon>Mus</taxon>
    </lineage>
</organism>
<reference key="1">
    <citation type="submission" date="2003-02" db="EMBL/GenBank/DDBJ databases">
        <title>Expression patterns of L1-family cell recognition molecules L1, CHL1, NrCAM, and neurofascin in the mouse brain.</title>
        <authorList>
            <person name="Dirks P."/>
            <person name="Montag-Sallaz M."/>
            <person name="Montag D."/>
        </authorList>
    </citation>
    <scope>NUCLEOTIDE SEQUENCE [MRNA]</scope>
    <source>
        <strain>Swiss Webster</strain>
        <tissue>Brain</tissue>
    </source>
</reference>
<reference key="2">
    <citation type="submission" date="2007-04" db="UniProtKB">
        <authorList>
            <person name="Lubec G."/>
            <person name="Kang S.U."/>
        </authorList>
    </citation>
    <scope>PROTEIN SEQUENCE OF 96-104; 243-260; 335-355; 387-396; 493-509; 573-585; 633-642; 681-719; 810-829 AND 1057-1076</scope>
    <scope>IDENTIFICATION BY MASS SPECTROMETRY</scope>
    <source>
        <strain>C57BL/6J</strain>
        <tissue>Brain</tissue>
    </source>
</reference>
<reference key="3">
    <citation type="journal article" date="2010" name="Cell">
        <title>A tissue-specific atlas of mouse protein phosphorylation and expression.</title>
        <authorList>
            <person name="Huttlin E.L."/>
            <person name="Jedrychowski M.P."/>
            <person name="Elias J.E."/>
            <person name="Goswami T."/>
            <person name="Rad R."/>
            <person name="Beausoleil S.A."/>
            <person name="Villen J."/>
            <person name="Haas W."/>
            <person name="Sowa M.E."/>
            <person name="Gygi S.P."/>
        </authorList>
    </citation>
    <scope>PHOSPHORYLATION [LARGE SCALE ANALYSIS] AT SER-1160; SER-1226; SER-1227 AND SER-1231</scope>
    <scope>IDENTIFICATION BY MASS SPECTROMETRY [LARGE SCALE ANALYSIS]</scope>
    <source>
        <tissue>Brain</tissue>
        <tissue>Pancreas</tissue>
    </source>
</reference>
<reference key="4">
    <citation type="journal article" date="2013" name="J. Biol. Chem.">
        <title>Myocilin mediates myelination in the peripheral nervous system through ErbB2/3 signaling.</title>
        <authorList>
            <person name="Kwon H.S."/>
            <person name="Johnson T.V."/>
            <person name="Joe M.K."/>
            <person name="Abu-Asab M."/>
            <person name="Zhang J."/>
            <person name="Chan C.C."/>
            <person name="Tomarev S.I."/>
        </authorList>
    </citation>
    <scope>INTERACTION WITH MYOC</scope>
</reference>
<feature type="signal peptide" evidence="4">
    <location>
        <begin position="1"/>
        <end position="24"/>
    </location>
</feature>
<feature type="chain" id="PRO_0000015050" description="Neurofascin">
    <location>
        <begin position="25"/>
        <end position="1240"/>
    </location>
</feature>
<feature type="topological domain" description="Extracellular" evidence="4">
    <location>
        <begin position="25"/>
        <end position="1110"/>
    </location>
</feature>
<feature type="transmembrane region" description="Helical" evidence="4">
    <location>
        <begin position="1111"/>
        <end position="1131"/>
    </location>
</feature>
<feature type="topological domain" description="Cytoplasmic" evidence="4">
    <location>
        <begin position="1132"/>
        <end position="1240"/>
    </location>
</feature>
<feature type="domain" description="Ig-like C2-type 1">
    <location>
        <begin position="41"/>
        <end position="137"/>
    </location>
</feature>
<feature type="domain" description="Ig-like C2-type 2">
    <location>
        <begin position="143"/>
        <end position="230"/>
    </location>
</feature>
<feature type="domain" description="Ig-like C2-type 3">
    <location>
        <begin position="244"/>
        <end position="332"/>
    </location>
</feature>
<feature type="domain" description="Ig-like C2-type 4">
    <location>
        <begin position="337"/>
        <end position="424"/>
    </location>
</feature>
<feature type="domain" description="Ig-like C2-type 5">
    <location>
        <begin position="430"/>
        <end position="517"/>
    </location>
</feature>
<feature type="domain" description="Ig-like C2-type 6">
    <location>
        <begin position="521"/>
        <end position="603"/>
    </location>
</feature>
<feature type="domain" description="Fibronectin type-III 1" evidence="6">
    <location>
        <begin position="630"/>
        <end position="725"/>
    </location>
</feature>
<feature type="domain" description="Fibronectin type-III 2" evidence="6">
    <location>
        <begin position="727"/>
        <end position="823"/>
    </location>
</feature>
<feature type="domain" description="Fibronectin type-III 3" evidence="6">
    <location>
        <begin position="827"/>
        <end position="923"/>
    </location>
</feature>
<feature type="domain" description="Fibronectin type-III 4" evidence="6">
    <location>
        <begin position="1007"/>
        <end position="1099"/>
    </location>
</feature>
<feature type="region of interest" description="Disordered" evidence="7">
    <location>
        <begin position="710"/>
        <end position="740"/>
    </location>
</feature>
<feature type="region of interest" description="Disordered" evidence="7">
    <location>
        <begin position="902"/>
        <end position="942"/>
    </location>
</feature>
<feature type="region of interest" description="Disordered" evidence="7">
    <location>
        <begin position="1141"/>
        <end position="1240"/>
    </location>
</feature>
<feature type="compositionally biased region" description="Low complexity" evidence="7">
    <location>
        <begin position="907"/>
        <end position="916"/>
    </location>
</feature>
<feature type="compositionally biased region" description="Pro residues" evidence="7">
    <location>
        <begin position="917"/>
        <end position="933"/>
    </location>
</feature>
<feature type="compositionally biased region" description="Acidic residues" evidence="7">
    <location>
        <begin position="1154"/>
        <end position="1165"/>
    </location>
</feature>
<feature type="compositionally biased region" description="Polar residues" evidence="7">
    <location>
        <begin position="1171"/>
        <end position="1184"/>
    </location>
</feature>
<feature type="modified residue" description="Phosphotyrosine" evidence="2">
    <location>
        <position position="481"/>
    </location>
</feature>
<feature type="modified residue" description="Phosphoserine" evidence="2">
    <location>
        <position position="485"/>
    </location>
</feature>
<feature type="modified residue" description="Phosphoserine" evidence="10">
    <location>
        <position position="1160"/>
    </location>
</feature>
<feature type="modified residue" description="Phosphoserine" evidence="3">
    <location>
        <position position="1174"/>
    </location>
</feature>
<feature type="modified residue" description="Phosphoserine" evidence="3">
    <location>
        <position position="1187"/>
    </location>
</feature>
<feature type="modified residue" description="Phosphoserine" evidence="3">
    <location>
        <position position="1190"/>
    </location>
</feature>
<feature type="modified residue" description="Phosphoserine" evidence="10">
    <location>
        <position position="1226"/>
    </location>
</feature>
<feature type="modified residue" description="Phosphoserine" evidence="10">
    <location>
        <position position="1227"/>
    </location>
</feature>
<feature type="modified residue" description="Phosphoserine" evidence="10">
    <location>
        <position position="1231"/>
    </location>
</feature>
<feature type="glycosylation site" description="N-linked (GlcNAc...) asparagine" evidence="4">
    <location>
        <position position="305"/>
    </location>
</feature>
<feature type="glycosylation site" description="N-linked (GlcNAc...) asparagine" evidence="4">
    <location>
        <position position="409"/>
    </location>
</feature>
<feature type="glycosylation site" description="N-linked (GlcNAc...) asparagine" evidence="4">
    <location>
        <position position="446"/>
    </location>
</feature>
<feature type="glycosylation site" description="N-linked (GlcNAc...) asparagine" evidence="4">
    <location>
        <position position="483"/>
    </location>
</feature>
<feature type="glycosylation site" description="N-linked (GlcNAc...) asparagine" evidence="4">
    <location>
        <position position="752"/>
    </location>
</feature>
<feature type="glycosylation site" description="N-linked (GlcNAc...) asparagine" evidence="4">
    <location>
        <position position="778"/>
    </location>
</feature>
<feature type="glycosylation site" description="N-linked (GlcNAc...) asparagine" evidence="4">
    <location>
        <position position="866"/>
    </location>
</feature>
<feature type="glycosylation site" description="N-linked (GlcNAc...) asparagine" evidence="4">
    <location>
        <position position="881"/>
    </location>
</feature>
<feature type="disulfide bond" evidence="5">
    <location>
        <begin position="63"/>
        <end position="118"/>
    </location>
</feature>
<feature type="disulfide bond" evidence="5">
    <location>
        <begin position="162"/>
        <end position="213"/>
    </location>
</feature>
<feature type="disulfide bond" evidence="5">
    <location>
        <begin position="268"/>
        <end position="316"/>
    </location>
</feature>
<feature type="disulfide bond" evidence="5">
    <location>
        <begin position="358"/>
        <end position="408"/>
    </location>
</feature>
<feature type="disulfide bond" evidence="5">
    <location>
        <begin position="452"/>
        <end position="501"/>
    </location>
</feature>
<feature type="disulfide bond" evidence="5">
    <location>
        <begin position="543"/>
        <end position="592"/>
    </location>
</feature>
<keyword id="KW-0130">Cell adhesion</keyword>
<keyword id="KW-1003">Cell membrane</keyword>
<keyword id="KW-0903">Direct protein sequencing</keyword>
<keyword id="KW-1015">Disulfide bond</keyword>
<keyword id="KW-0325">Glycoprotein</keyword>
<keyword id="KW-0393">Immunoglobulin domain</keyword>
<keyword id="KW-0472">Membrane</keyword>
<keyword id="KW-0597">Phosphoprotein</keyword>
<keyword id="KW-1185">Reference proteome</keyword>
<keyword id="KW-0677">Repeat</keyword>
<keyword id="KW-0732">Signal</keyword>
<keyword id="KW-0812">Transmembrane</keyword>
<keyword id="KW-1133">Transmembrane helix</keyword>
<accession>Q810U3</accession>
<sequence length="1240" mass="137975">MARQQAPPWVHIALILFLLSLGGAIEIPMDPSIQNELTQPPTITKQSVKDHIVDPRDNILIECEAKGNPAPSFHWTRNSRFFNIAKDPRVSMRRRSGTLVIDFRSGGRPEEYEGEYQCFARNKFGTALSNRIRLQVSKSPLWPKENLDPVVVQEGAPLTLQCNPPPGLPSPVIFWMSSSMEPITQDKRVSQGHNGDLYFSNVMLQDMQTDYSCNARFHFTHTIQQKNPFTLKVLTTRGVAERTPSFMYPQGTSSSQMVLRGMDLLLECIASGVPTPDIAWYKKGGDLPSNKAKFENFNKALRITNVSEEDSGEYFCLASNKMGSIRHTISVRVKAAPYWLDEPKNLILAPGEDGRLVCRANGNPKPTVQWMVNGEPLQSAPPNPNREVAGDTIIFRDTQISSRAVYQCNTSNEHGYLLANAFVSVLDVPPRMLSARNQLIRVILYNRTRLDCPFFGSPIPTLRWFKNGQGSNLDGGNYHVYENGSLEIKMIRKEDQGIYTCVATNILGKAENQVRLEVKDPTRIYRMPEDQVAKRGTTVQLECRVKHDPSLKLTVSWLKDDEPLYIGNRMKKEDDSLTIFGVAERDQGSYTCMASTELDQDLAKAYLTVLADQATPTNRLAALPKGRPDRPRDLELTDLAERSVRLTWIPGDDNNSPITDYVVQFEEDQFQPGVWHDHSRFPGSVNSAVLHLSPYVNYQFRVIAVNEVGSSHPSLPSERYRTSGAPPESNPSDVKGEGTRKNNMEITWTPMNATSAFGPNLRYIVKWRRRETRETWNNVTVWGSRYVVGQTPVYVPYEIRVQAENDFGKGPEPDTIIGYSGEDLPSAPRRFRVRQPNLETINLEWDHPEHPNGILIGYILRYVPFNGTKLGKQMVENFSPNQTKFSVQRADPVSRYRFSLSARTQVGSGEAATEESPAPPNEATPTAAPPTLPPTTVGTTGLVSSTDATALAATSEATTVPIIPTVVPTTVATTIATTTTTTAATTTTTTTESPPTTTAGTKIHETAPDEQSIWNVTVLPNSKWANITWKHNFRPGTDFVVEYIDSNHTKKTVPVKAQAQPIQLTDLFPGMTYTLRVYSRDNEGISSTVITFMTSTAYTNNQADIATQGWFIGLMCAIALLVLILLIVCFIKRSRGGKYPVREKKDVPLGPEDPKEEDGSFDYSDEDNKPLQGSQTSLDGTIKQQESDDSLVDYGEGGEGQFNEDGSFIGQYTVKKDKEETEGNESSEATSPVNAIYSLA</sequence>
<evidence type="ECO:0000250" key="1"/>
<evidence type="ECO:0000250" key="2">
    <source>
        <dbReference type="UniProtKB" id="O94856"/>
    </source>
</evidence>
<evidence type="ECO:0000250" key="3">
    <source>
        <dbReference type="UniProtKB" id="P97685"/>
    </source>
</evidence>
<evidence type="ECO:0000255" key="4"/>
<evidence type="ECO:0000255" key="5">
    <source>
        <dbReference type="PROSITE-ProRule" id="PRU00114"/>
    </source>
</evidence>
<evidence type="ECO:0000255" key="6">
    <source>
        <dbReference type="PROSITE-ProRule" id="PRU00316"/>
    </source>
</evidence>
<evidence type="ECO:0000256" key="7">
    <source>
        <dbReference type="SAM" id="MobiDB-lite"/>
    </source>
</evidence>
<evidence type="ECO:0000269" key="8">
    <source>
    </source>
</evidence>
<evidence type="ECO:0000305" key="9"/>
<evidence type="ECO:0007744" key="10">
    <source>
    </source>
</evidence>
<comment type="function">
    <text evidence="1">Cell adhesion, ankyrin-binding protein which may be involved in neurite extension, axonal guidance, synaptogenesis, myelination and neuron-glial cell interactions.</text>
</comment>
<comment type="subunit">
    <text evidence="1 8">Horseshoe-shaped homodimer. Probable constituent of a NFASC/NRCAM/ankyrin-G complex. Associates with the sodium channel beta-1 (SCN1B) and beta-3 (SCN3B) subunits. Interacts with GLDN/gliomedin (By similarity). Interacts with MYOC.</text>
</comment>
<comment type="subcellular location">
    <subcellularLocation>
        <location>Cell membrane</location>
        <topology>Single-pass type I membrane protein</topology>
    </subcellularLocation>
</comment>
<comment type="domain">
    <text evidence="1">Homophilic adhesion is primarily mediated by the interaction of the second Ig-like domains.</text>
</comment>
<comment type="similarity">
    <text evidence="9">Belongs to the immunoglobulin superfamily. L1/neurofascin/NgCAM family.</text>
</comment>
<dbReference type="EMBL" id="AJ543322">
    <property type="protein sequence ID" value="CAD65849.1"/>
    <property type="molecule type" value="mRNA"/>
</dbReference>
<dbReference type="CCDS" id="CCDS35707.1"/>
<dbReference type="RefSeq" id="NP_874385.1">
    <property type="nucleotide sequence ID" value="NM_182716.4"/>
</dbReference>
<dbReference type="SMR" id="Q810U3"/>
<dbReference type="BioGRID" id="234609">
    <property type="interactions" value="11"/>
</dbReference>
<dbReference type="DIP" id="DIP-31976N"/>
<dbReference type="FunCoup" id="Q810U3">
    <property type="interactions" value="652"/>
</dbReference>
<dbReference type="IntAct" id="Q810U3">
    <property type="interactions" value="4"/>
</dbReference>
<dbReference type="STRING" id="10090.ENSMUSP00000092148"/>
<dbReference type="GlyCosmos" id="Q810U3">
    <property type="glycosylation" value="10 sites, 26 glycans"/>
</dbReference>
<dbReference type="GlyGen" id="Q810U3">
    <property type="glycosylation" value="14 sites, 32 N-linked glycans (12 sites), 1 O-linked glycan (1 site)"/>
</dbReference>
<dbReference type="iPTMnet" id="Q810U3"/>
<dbReference type="PhosphoSitePlus" id="Q810U3"/>
<dbReference type="SwissPalm" id="Q810U3"/>
<dbReference type="jPOST" id="Q810U3"/>
<dbReference type="PaxDb" id="10090-ENSMUSP00000092148"/>
<dbReference type="PeptideAtlas" id="Q810U3"/>
<dbReference type="ProteomicsDB" id="293538"/>
<dbReference type="Antibodypedia" id="2194">
    <property type="antibodies" value="225 antibodies from 34 providers"/>
</dbReference>
<dbReference type="DNASU" id="269116"/>
<dbReference type="Ensembl" id="ENSMUST00000094569.11">
    <property type="protein sequence ID" value="ENSMUSP00000092148.5"/>
    <property type="gene ID" value="ENSMUSG00000026442.15"/>
</dbReference>
<dbReference type="GeneID" id="269116"/>
<dbReference type="KEGG" id="mmu:269116"/>
<dbReference type="UCSC" id="uc007cpe.2">
    <property type="organism name" value="mouse"/>
</dbReference>
<dbReference type="AGR" id="MGI:104753"/>
<dbReference type="CTD" id="23114"/>
<dbReference type="MGI" id="MGI:104753">
    <property type="gene designation" value="Nfasc"/>
</dbReference>
<dbReference type="VEuPathDB" id="HostDB:ENSMUSG00000026442"/>
<dbReference type="eggNOG" id="KOG3513">
    <property type="taxonomic scope" value="Eukaryota"/>
</dbReference>
<dbReference type="GeneTree" id="ENSGT00940000157024"/>
<dbReference type="InParanoid" id="Q810U3"/>
<dbReference type="PhylomeDB" id="Q810U3"/>
<dbReference type="TreeFam" id="TF351098"/>
<dbReference type="Reactome" id="R-MMU-447043">
    <property type="pathway name" value="Neurofascin interactions"/>
</dbReference>
<dbReference type="Reactome" id="R-MMU-6798695">
    <property type="pathway name" value="Neutrophil degranulation"/>
</dbReference>
<dbReference type="BioGRID-ORCS" id="269116">
    <property type="hits" value="1 hit in 78 CRISPR screens"/>
</dbReference>
<dbReference type="CD-CODE" id="CE726F99">
    <property type="entry name" value="Postsynaptic density"/>
</dbReference>
<dbReference type="ChiTaRS" id="Nfasc">
    <property type="organism name" value="mouse"/>
</dbReference>
<dbReference type="PRO" id="PR:Q810U3"/>
<dbReference type="Proteomes" id="UP000000589">
    <property type="component" value="Chromosome 1"/>
</dbReference>
<dbReference type="RNAct" id="Q810U3">
    <property type="molecule type" value="protein"/>
</dbReference>
<dbReference type="Bgee" id="ENSMUSG00000026442">
    <property type="expression patterns" value="Expressed in retinal neural layer and 137 other cell types or tissues"/>
</dbReference>
<dbReference type="ExpressionAtlas" id="Q810U3">
    <property type="expression patterns" value="baseline and differential"/>
</dbReference>
<dbReference type="GO" id="GO:0030424">
    <property type="term" value="C:axon"/>
    <property type="evidence" value="ECO:0000314"/>
    <property type="project" value="MGI"/>
</dbReference>
<dbReference type="GO" id="GO:0043194">
    <property type="term" value="C:axon initial segment"/>
    <property type="evidence" value="ECO:0000314"/>
    <property type="project" value="MGI"/>
</dbReference>
<dbReference type="GO" id="GO:0043209">
    <property type="term" value="C:myelin sheath"/>
    <property type="evidence" value="ECO:0007005"/>
    <property type="project" value="UniProtKB"/>
</dbReference>
<dbReference type="GO" id="GO:0033268">
    <property type="term" value="C:node of Ranvier"/>
    <property type="evidence" value="ECO:0000314"/>
    <property type="project" value="UniProtKB"/>
</dbReference>
<dbReference type="GO" id="GO:0033010">
    <property type="term" value="C:paranodal junction"/>
    <property type="evidence" value="ECO:0000314"/>
    <property type="project" value="UniProtKB"/>
</dbReference>
<dbReference type="GO" id="GO:0033270">
    <property type="term" value="C:paranode region of axon"/>
    <property type="evidence" value="ECO:0000314"/>
    <property type="project" value="BHF-UCL"/>
</dbReference>
<dbReference type="GO" id="GO:0005886">
    <property type="term" value="C:plasma membrane"/>
    <property type="evidence" value="ECO:0000314"/>
    <property type="project" value="MGI"/>
</dbReference>
<dbReference type="GO" id="GO:0005918">
    <property type="term" value="C:septate junction"/>
    <property type="evidence" value="ECO:0000314"/>
    <property type="project" value="MGI"/>
</dbReference>
<dbReference type="GO" id="GO:0086080">
    <property type="term" value="F:protein binding involved in heterotypic cell-cell adhesion"/>
    <property type="evidence" value="ECO:0000316"/>
    <property type="project" value="MGI"/>
</dbReference>
<dbReference type="GO" id="GO:0007411">
    <property type="term" value="P:axon guidance"/>
    <property type="evidence" value="ECO:0000314"/>
    <property type="project" value="MGI"/>
</dbReference>
<dbReference type="GO" id="GO:0045162">
    <property type="term" value="P:clustering of voltage-gated sodium channels"/>
    <property type="evidence" value="ECO:0000315"/>
    <property type="project" value="MGI"/>
</dbReference>
<dbReference type="GO" id="GO:0030913">
    <property type="term" value="P:paranodal junction assembly"/>
    <property type="evidence" value="ECO:0000315"/>
    <property type="project" value="UniProtKB"/>
</dbReference>
<dbReference type="GO" id="GO:0071205">
    <property type="term" value="P:protein localization to juxtaparanode region of axon"/>
    <property type="evidence" value="ECO:0000315"/>
    <property type="project" value="MGI"/>
</dbReference>
<dbReference type="GO" id="GO:0002175">
    <property type="term" value="P:protein localization to paranode region of axon"/>
    <property type="evidence" value="ECO:0000315"/>
    <property type="project" value="MGI"/>
</dbReference>
<dbReference type="GO" id="GO:0050808">
    <property type="term" value="P:synapse organization"/>
    <property type="evidence" value="ECO:0000315"/>
    <property type="project" value="MGI"/>
</dbReference>
<dbReference type="GO" id="GO:0019226">
    <property type="term" value="P:transmission of nerve impulse"/>
    <property type="evidence" value="ECO:0000315"/>
    <property type="project" value="MGI"/>
</dbReference>
<dbReference type="CDD" id="cd00063">
    <property type="entry name" value="FN3"/>
    <property type="match status" value="4"/>
</dbReference>
<dbReference type="CDD" id="cd05731">
    <property type="entry name" value="Ig3_L1-CAM_like"/>
    <property type="match status" value="1"/>
</dbReference>
<dbReference type="CDD" id="cd05845">
    <property type="entry name" value="IgI_2_L1-CAM_like"/>
    <property type="match status" value="1"/>
</dbReference>
<dbReference type="CDD" id="cd05875">
    <property type="entry name" value="IgI_hNeurofascin_like"/>
    <property type="match status" value="1"/>
</dbReference>
<dbReference type="FunFam" id="2.60.40.10:FF:000057">
    <property type="entry name" value="neural cell adhesion molecule L1"/>
    <property type="match status" value="1"/>
</dbReference>
<dbReference type="FunFam" id="2.60.40.10:FF:000512">
    <property type="entry name" value="neurofascin isoform X1"/>
    <property type="match status" value="1"/>
</dbReference>
<dbReference type="FunFam" id="2.60.40.10:FF:000574">
    <property type="entry name" value="neurofascin isoform X1"/>
    <property type="match status" value="1"/>
</dbReference>
<dbReference type="FunFam" id="2.60.40.10:FF:001360">
    <property type="entry name" value="neurofascin isoform X1"/>
    <property type="match status" value="1"/>
</dbReference>
<dbReference type="FunFam" id="2.60.40.10:FF:000525">
    <property type="entry name" value="neurofascin isoform X2"/>
    <property type="match status" value="1"/>
</dbReference>
<dbReference type="FunFam" id="2.60.40.10:FF:000005">
    <property type="entry name" value="Neuronal cell adhesion molecule"/>
    <property type="match status" value="1"/>
</dbReference>
<dbReference type="FunFam" id="2.60.40.10:FF:000038">
    <property type="entry name" value="Neuronal cell adhesion molecule"/>
    <property type="match status" value="1"/>
</dbReference>
<dbReference type="FunFam" id="2.60.40.10:FF:000078">
    <property type="entry name" value="Neuronal cell adhesion molecule"/>
    <property type="match status" value="1"/>
</dbReference>
<dbReference type="FunFam" id="2.60.40.10:FF:000114">
    <property type="entry name" value="Neuronal cell adhesion molecule"/>
    <property type="match status" value="1"/>
</dbReference>
<dbReference type="FunFam" id="2.60.40.10:FF:000347">
    <property type="entry name" value="Neuronal cell adhesion molecule"/>
    <property type="match status" value="1"/>
</dbReference>
<dbReference type="Gene3D" id="2.60.40.10">
    <property type="entry name" value="Immunoglobulins"/>
    <property type="match status" value="10"/>
</dbReference>
<dbReference type="InterPro" id="IPR003961">
    <property type="entry name" value="FN3_dom"/>
</dbReference>
<dbReference type="InterPro" id="IPR036116">
    <property type="entry name" value="FN3_sf"/>
</dbReference>
<dbReference type="InterPro" id="IPR007110">
    <property type="entry name" value="Ig-like_dom"/>
</dbReference>
<dbReference type="InterPro" id="IPR036179">
    <property type="entry name" value="Ig-like_dom_sf"/>
</dbReference>
<dbReference type="InterPro" id="IPR013783">
    <property type="entry name" value="Ig-like_fold"/>
</dbReference>
<dbReference type="InterPro" id="IPR013098">
    <property type="entry name" value="Ig_I-set"/>
</dbReference>
<dbReference type="InterPro" id="IPR003599">
    <property type="entry name" value="Ig_sub"/>
</dbReference>
<dbReference type="InterPro" id="IPR003598">
    <property type="entry name" value="Ig_sub2"/>
</dbReference>
<dbReference type="InterPro" id="IPR013151">
    <property type="entry name" value="Immunoglobulin_dom"/>
</dbReference>
<dbReference type="InterPro" id="IPR026966">
    <property type="entry name" value="Neurofascin/L1/NrCAM_C"/>
</dbReference>
<dbReference type="InterPro" id="IPR026965">
    <property type="entry name" value="NFASC_Ig-like"/>
</dbReference>
<dbReference type="PANTHER" id="PTHR44170:SF12">
    <property type="entry name" value="NEUROFASCIN"/>
    <property type="match status" value="1"/>
</dbReference>
<dbReference type="PANTHER" id="PTHR44170">
    <property type="entry name" value="PROTEIN SIDEKICK"/>
    <property type="match status" value="1"/>
</dbReference>
<dbReference type="Pfam" id="PF13882">
    <property type="entry name" value="Bravo_FIGEY"/>
    <property type="match status" value="1"/>
</dbReference>
<dbReference type="Pfam" id="PF00041">
    <property type="entry name" value="fn3"/>
    <property type="match status" value="2"/>
</dbReference>
<dbReference type="Pfam" id="PF07679">
    <property type="entry name" value="I-set"/>
    <property type="match status" value="2"/>
</dbReference>
<dbReference type="Pfam" id="PF00047">
    <property type="entry name" value="ig"/>
    <property type="match status" value="1"/>
</dbReference>
<dbReference type="Pfam" id="PF13927">
    <property type="entry name" value="Ig_3"/>
    <property type="match status" value="3"/>
</dbReference>
<dbReference type="SMART" id="SM00060">
    <property type="entry name" value="FN3"/>
    <property type="match status" value="4"/>
</dbReference>
<dbReference type="SMART" id="SM00409">
    <property type="entry name" value="IG"/>
    <property type="match status" value="6"/>
</dbReference>
<dbReference type="SMART" id="SM00408">
    <property type="entry name" value="IGc2"/>
    <property type="match status" value="6"/>
</dbReference>
<dbReference type="SUPFAM" id="SSF49265">
    <property type="entry name" value="Fibronectin type III"/>
    <property type="match status" value="3"/>
</dbReference>
<dbReference type="SUPFAM" id="SSF48726">
    <property type="entry name" value="Immunoglobulin"/>
    <property type="match status" value="6"/>
</dbReference>
<dbReference type="PROSITE" id="PS50853">
    <property type="entry name" value="FN3"/>
    <property type="match status" value="4"/>
</dbReference>
<dbReference type="PROSITE" id="PS50835">
    <property type="entry name" value="IG_LIKE"/>
    <property type="match status" value="6"/>
</dbReference>
<proteinExistence type="evidence at protein level"/>
<gene>
    <name type="primary">Nfasc</name>
</gene>